<comment type="function">
    <text evidence="1">Involved in the biosynthesis of ADP-glucose, a building block required for the elongation reactions to produce glycogen. Catalyzes the reaction between ATP and alpha-D-glucose 1-phosphate (G1P) to produce pyrophosphate and ADP-Glc.</text>
</comment>
<comment type="catalytic activity">
    <reaction evidence="1">
        <text>alpha-D-glucose 1-phosphate + ATP + H(+) = ADP-alpha-D-glucose + diphosphate</text>
        <dbReference type="Rhea" id="RHEA:12120"/>
        <dbReference type="ChEBI" id="CHEBI:15378"/>
        <dbReference type="ChEBI" id="CHEBI:30616"/>
        <dbReference type="ChEBI" id="CHEBI:33019"/>
        <dbReference type="ChEBI" id="CHEBI:57498"/>
        <dbReference type="ChEBI" id="CHEBI:58601"/>
        <dbReference type="EC" id="2.7.7.27"/>
    </reaction>
</comment>
<comment type="pathway">
    <text evidence="1">Glycan biosynthesis; glycogen biosynthesis.</text>
</comment>
<comment type="subunit">
    <text evidence="1">Homotetramer.</text>
</comment>
<comment type="similarity">
    <text evidence="1">Belongs to the bacterial/plant glucose-1-phosphate adenylyltransferase family.</text>
</comment>
<organism>
    <name type="scientific">Vibrio vulnificus (strain YJ016)</name>
    <dbReference type="NCBI Taxonomy" id="196600"/>
    <lineage>
        <taxon>Bacteria</taxon>
        <taxon>Pseudomonadati</taxon>
        <taxon>Pseudomonadota</taxon>
        <taxon>Gammaproteobacteria</taxon>
        <taxon>Vibrionales</taxon>
        <taxon>Vibrionaceae</taxon>
        <taxon>Vibrio</taxon>
    </lineage>
</organism>
<proteinExistence type="inferred from homology"/>
<keyword id="KW-0067">ATP-binding</keyword>
<keyword id="KW-0119">Carbohydrate metabolism</keyword>
<keyword id="KW-0320">Glycogen biosynthesis</keyword>
<keyword id="KW-0321">Glycogen metabolism</keyword>
<keyword id="KW-0547">Nucleotide-binding</keyword>
<keyword id="KW-0548">Nucleotidyltransferase</keyword>
<keyword id="KW-0808">Transferase</keyword>
<gene>
    <name evidence="1" type="primary">glgC2</name>
    <name type="ordered locus">VVA0721</name>
</gene>
<sequence length="404" mass="45182">MQDILTVILAGGMGSRLSPLTDDRAKPAVPFGGKYRIIDFTLTNCLHSGLRKILVLTQYKSHSLQKHLRDGWSIFNPELGEYITSVPPQMRKGGKWYEGTADAIYHNLWLLERSEAKYVMVLSGDHIYRMDYAPMLEEHIANNAALTVACMDVNCKEAKAFGVMGIDEHHRVHSFVEKPQNPPHLPNDPERSLVSMGIYIFSMEVLQQALIEDADNDASSHDFGKDIIPKLIDTGSVFAYKFCGSKGRVDKDCYWRDVGTIDSFYQANMDLLEPIPPMNLYQKDWGIRTYEPQYPPARTVSSGSGNEGIFINSMISNGVINSGGSVQHSIVSSNVRINDSATIVDSIIFDDVEIGEGCQLVNCIIDKHVKVPPYTQIGLNRLEDAQRFKISENGIVVVPESYQF</sequence>
<reference key="1">
    <citation type="journal article" date="2003" name="Genome Res.">
        <title>Comparative genome analysis of Vibrio vulnificus, a marine pathogen.</title>
        <authorList>
            <person name="Chen C.-Y."/>
            <person name="Wu K.-M."/>
            <person name="Chang Y.-C."/>
            <person name="Chang C.-H."/>
            <person name="Tsai H.-C."/>
            <person name="Liao T.-L."/>
            <person name="Liu Y.-M."/>
            <person name="Chen H.-J."/>
            <person name="Shen A.B.-T."/>
            <person name="Li J.-C."/>
            <person name="Su T.-L."/>
            <person name="Shao C.-P."/>
            <person name="Lee C.-T."/>
            <person name="Hor L.-I."/>
            <person name="Tsai S.-F."/>
        </authorList>
    </citation>
    <scope>NUCLEOTIDE SEQUENCE [LARGE SCALE GENOMIC DNA]</scope>
    <source>
        <strain>YJ016</strain>
    </source>
</reference>
<accession>Q7MEE9</accession>
<evidence type="ECO:0000255" key="1">
    <source>
        <dbReference type="HAMAP-Rule" id="MF_00624"/>
    </source>
</evidence>
<name>GLGC2_VIBVY</name>
<dbReference type="EC" id="2.7.7.27" evidence="1"/>
<dbReference type="EMBL" id="BA000038">
    <property type="protein sequence ID" value="BAC96747.1"/>
    <property type="molecule type" value="Genomic_DNA"/>
</dbReference>
<dbReference type="SMR" id="Q7MEE9"/>
<dbReference type="STRING" id="672.VV93_v1c37170"/>
<dbReference type="KEGG" id="vvy:VVA0721"/>
<dbReference type="eggNOG" id="COG0448">
    <property type="taxonomic scope" value="Bacteria"/>
</dbReference>
<dbReference type="HOGENOM" id="CLU_029499_14_1_6"/>
<dbReference type="UniPathway" id="UPA00164"/>
<dbReference type="Proteomes" id="UP000002675">
    <property type="component" value="Chromosome II"/>
</dbReference>
<dbReference type="GO" id="GO:0005524">
    <property type="term" value="F:ATP binding"/>
    <property type="evidence" value="ECO:0007669"/>
    <property type="project" value="UniProtKB-KW"/>
</dbReference>
<dbReference type="GO" id="GO:0008878">
    <property type="term" value="F:glucose-1-phosphate adenylyltransferase activity"/>
    <property type="evidence" value="ECO:0007669"/>
    <property type="project" value="UniProtKB-UniRule"/>
</dbReference>
<dbReference type="GO" id="GO:0005978">
    <property type="term" value="P:glycogen biosynthetic process"/>
    <property type="evidence" value="ECO:0007669"/>
    <property type="project" value="UniProtKB-UniRule"/>
</dbReference>
<dbReference type="CDD" id="cd02508">
    <property type="entry name" value="ADP_Glucose_PP"/>
    <property type="match status" value="1"/>
</dbReference>
<dbReference type="CDD" id="cd04651">
    <property type="entry name" value="LbH_G1P_AT_C"/>
    <property type="match status" value="1"/>
</dbReference>
<dbReference type="Gene3D" id="2.160.10.10">
    <property type="entry name" value="Hexapeptide repeat proteins"/>
    <property type="match status" value="1"/>
</dbReference>
<dbReference type="Gene3D" id="3.90.550.10">
    <property type="entry name" value="Spore Coat Polysaccharide Biosynthesis Protein SpsA, Chain A"/>
    <property type="match status" value="1"/>
</dbReference>
<dbReference type="HAMAP" id="MF_00624">
    <property type="entry name" value="GlgC"/>
    <property type="match status" value="1"/>
</dbReference>
<dbReference type="InterPro" id="IPR011831">
    <property type="entry name" value="ADP-Glc_PPase"/>
</dbReference>
<dbReference type="InterPro" id="IPR005836">
    <property type="entry name" value="ADP_Glu_pyroP_CS"/>
</dbReference>
<dbReference type="InterPro" id="IPR023049">
    <property type="entry name" value="GlgC_bac"/>
</dbReference>
<dbReference type="InterPro" id="IPR056818">
    <property type="entry name" value="GlmU/GlgC-like_hexapep"/>
</dbReference>
<dbReference type="InterPro" id="IPR005835">
    <property type="entry name" value="NTP_transferase_dom"/>
</dbReference>
<dbReference type="InterPro" id="IPR029044">
    <property type="entry name" value="Nucleotide-diphossugar_trans"/>
</dbReference>
<dbReference type="InterPro" id="IPR011004">
    <property type="entry name" value="Trimer_LpxA-like_sf"/>
</dbReference>
<dbReference type="NCBIfam" id="TIGR02091">
    <property type="entry name" value="glgC"/>
    <property type="match status" value="1"/>
</dbReference>
<dbReference type="NCBIfam" id="NF001947">
    <property type="entry name" value="PRK00725.1"/>
    <property type="match status" value="1"/>
</dbReference>
<dbReference type="NCBIfam" id="NF002023">
    <property type="entry name" value="PRK00844.1"/>
    <property type="match status" value="1"/>
</dbReference>
<dbReference type="PANTHER" id="PTHR43523:SF2">
    <property type="entry name" value="GLUCOSE-1-PHOSPHATE ADENYLYLTRANSFERASE"/>
    <property type="match status" value="1"/>
</dbReference>
<dbReference type="PANTHER" id="PTHR43523">
    <property type="entry name" value="GLUCOSE-1-PHOSPHATE ADENYLYLTRANSFERASE-RELATED"/>
    <property type="match status" value="1"/>
</dbReference>
<dbReference type="Pfam" id="PF24894">
    <property type="entry name" value="Hexapep_GlmU"/>
    <property type="match status" value="1"/>
</dbReference>
<dbReference type="Pfam" id="PF00483">
    <property type="entry name" value="NTP_transferase"/>
    <property type="match status" value="1"/>
</dbReference>
<dbReference type="SUPFAM" id="SSF53448">
    <property type="entry name" value="Nucleotide-diphospho-sugar transferases"/>
    <property type="match status" value="1"/>
</dbReference>
<dbReference type="SUPFAM" id="SSF51161">
    <property type="entry name" value="Trimeric LpxA-like enzymes"/>
    <property type="match status" value="1"/>
</dbReference>
<dbReference type="PROSITE" id="PS00808">
    <property type="entry name" value="ADP_GLC_PYROPHOSPH_1"/>
    <property type="match status" value="1"/>
</dbReference>
<dbReference type="PROSITE" id="PS00809">
    <property type="entry name" value="ADP_GLC_PYROPHOSPH_2"/>
    <property type="match status" value="1"/>
</dbReference>
<dbReference type="PROSITE" id="PS00810">
    <property type="entry name" value="ADP_GLC_PYROPHOSPH_3"/>
    <property type="match status" value="1"/>
</dbReference>
<protein>
    <recommendedName>
        <fullName evidence="1">Glucose-1-phosphate adenylyltransferase 2</fullName>
        <ecNumber evidence="1">2.7.7.27</ecNumber>
    </recommendedName>
    <alternativeName>
        <fullName evidence="1">ADP-glucose pyrophosphorylase 2</fullName>
        <shortName evidence="1">ADPGlc PPase 2</shortName>
    </alternativeName>
    <alternativeName>
        <fullName evidence="1">ADP-glucose synthase 2</fullName>
    </alternativeName>
</protein>
<feature type="chain" id="PRO_0000195351" description="Glucose-1-phosphate adenylyltransferase 2">
    <location>
        <begin position="1"/>
        <end position="404"/>
    </location>
</feature>
<feature type="binding site" evidence="1">
    <location>
        <position position="97"/>
    </location>
    <ligand>
        <name>alpha-D-glucose 1-phosphate</name>
        <dbReference type="ChEBI" id="CHEBI:58601"/>
    </ligand>
</feature>
<feature type="binding site" evidence="1">
    <location>
        <position position="162"/>
    </location>
    <ligand>
        <name>alpha-D-glucose 1-phosphate</name>
        <dbReference type="ChEBI" id="CHEBI:58601"/>
    </ligand>
</feature>
<feature type="binding site" evidence="1">
    <location>
        <begin position="177"/>
        <end position="178"/>
    </location>
    <ligand>
        <name>alpha-D-glucose 1-phosphate</name>
        <dbReference type="ChEBI" id="CHEBI:58601"/>
    </ligand>
</feature>
<feature type="binding site" evidence="1">
    <location>
        <position position="195"/>
    </location>
    <ligand>
        <name>alpha-D-glucose 1-phosphate</name>
        <dbReference type="ChEBI" id="CHEBI:58601"/>
    </ligand>
</feature>